<gene>
    <name type="primary">MTFMT</name>
    <name type="synonym">FMT</name>
</gene>
<accession>O77480</accession>
<evidence type="ECO:0000269" key="1">
    <source>
    </source>
</evidence>
<evidence type="ECO:0000305" key="2"/>
<evidence type="ECO:0000305" key="3">
    <source>
    </source>
</evidence>
<dbReference type="EC" id="2.1.2.9" evidence="1"/>
<dbReference type="EMBL" id="AB004316">
    <property type="protein sequence ID" value="BAA31237.1"/>
    <property type="molecule type" value="mRNA"/>
</dbReference>
<dbReference type="RefSeq" id="NP_001159995.1">
    <property type="nucleotide sequence ID" value="NM_001166523.3"/>
</dbReference>
<dbReference type="SMR" id="O77480"/>
<dbReference type="FunCoup" id="O77480">
    <property type="interactions" value="1320"/>
</dbReference>
<dbReference type="STRING" id="9913.ENSBTAP00000028820"/>
<dbReference type="PaxDb" id="9913-ENSBTAP00000028820"/>
<dbReference type="Ensembl" id="ENSBTAT00000028820.6">
    <property type="protein sequence ID" value="ENSBTAP00000028820.4"/>
    <property type="gene ID" value="ENSBTAG00000021630.6"/>
</dbReference>
<dbReference type="GeneID" id="286855"/>
<dbReference type="KEGG" id="bta:286855"/>
<dbReference type="CTD" id="123263"/>
<dbReference type="VEuPathDB" id="HostDB:ENSBTAG00000021630"/>
<dbReference type="VGNC" id="VGNC:31724">
    <property type="gene designation" value="MTFMT"/>
</dbReference>
<dbReference type="eggNOG" id="KOG3082">
    <property type="taxonomic scope" value="Eukaryota"/>
</dbReference>
<dbReference type="GeneTree" id="ENSGT00390000017828"/>
<dbReference type="HOGENOM" id="CLU_033347_0_0_1"/>
<dbReference type="InParanoid" id="O77480"/>
<dbReference type="OMA" id="GASPIHE"/>
<dbReference type="OrthoDB" id="10268103at2759"/>
<dbReference type="TreeFam" id="TF323405"/>
<dbReference type="SABIO-RK" id="O77480"/>
<dbReference type="Proteomes" id="UP000009136">
    <property type="component" value="Chromosome 10"/>
</dbReference>
<dbReference type="Bgee" id="ENSBTAG00000021630">
    <property type="expression patterns" value="Expressed in oocyte and 103 other cell types or tissues"/>
</dbReference>
<dbReference type="GO" id="GO:0005759">
    <property type="term" value="C:mitochondrial matrix"/>
    <property type="evidence" value="ECO:0000304"/>
    <property type="project" value="Reactome"/>
</dbReference>
<dbReference type="GO" id="GO:0005739">
    <property type="term" value="C:mitochondrion"/>
    <property type="evidence" value="ECO:0000314"/>
    <property type="project" value="UniProtKB"/>
</dbReference>
<dbReference type="GO" id="GO:0004479">
    <property type="term" value="F:methionyl-tRNA formyltransferase activity"/>
    <property type="evidence" value="ECO:0000314"/>
    <property type="project" value="UniProtKB"/>
</dbReference>
<dbReference type="GO" id="GO:0071951">
    <property type="term" value="P:conversion of methionyl-tRNA to N-formyl-methionyl-tRNA"/>
    <property type="evidence" value="ECO:0000314"/>
    <property type="project" value="UniProtKB"/>
</dbReference>
<dbReference type="CDD" id="cd08646">
    <property type="entry name" value="FMT_core_Met-tRNA-FMT_N"/>
    <property type="match status" value="1"/>
</dbReference>
<dbReference type="FunFam" id="3.40.50.12230:FF:000003">
    <property type="entry name" value="methionyl-tRNA formyltransferase, mitochondrial"/>
    <property type="match status" value="1"/>
</dbReference>
<dbReference type="Gene3D" id="3.40.50.12230">
    <property type="match status" value="1"/>
</dbReference>
<dbReference type="InterPro" id="IPR005794">
    <property type="entry name" value="Fmt"/>
</dbReference>
<dbReference type="InterPro" id="IPR005793">
    <property type="entry name" value="Formyl_trans_C"/>
</dbReference>
<dbReference type="InterPro" id="IPR002376">
    <property type="entry name" value="Formyl_transf_N"/>
</dbReference>
<dbReference type="InterPro" id="IPR036477">
    <property type="entry name" value="Formyl_transf_N_sf"/>
</dbReference>
<dbReference type="InterPro" id="IPR011034">
    <property type="entry name" value="Formyl_transferase-like_C_sf"/>
</dbReference>
<dbReference type="InterPro" id="IPR041711">
    <property type="entry name" value="Met-tRNA-FMT_N"/>
</dbReference>
<dbReference type="NCBIfam" id="TIGR00460">
    <property type="entry name" value="fmt"/>
    <property type="match status" value="1"/>
</dbReference>
<dbReference type="PANTHER" id="PTHR11138">
    <property type="entry name" value="METHIONYL-TRNA FORMYLTRANSFERASE"/>
    <property type="match status" value="1"/>
</dbReference>
<dbReference type="PANTHER" id="PTHR11138:SF5">
    <property type="entry name" value="METHIONYL-TRNA FORMYLTRANSFERASE, MITOCHONDRIAL"/>
    <property type="match status" value="1"/>
</dbReference>
<dbReference type="Pfam" id="PF02911">
    <property type="entry name" value="Formyl_trans_C"/>
    <property type="match status" value="1"/>
</dbReference>
<dbReference type="Pfam" id="PF00551">
    <property type="entry name" value="Formyl_trans_N"/>
    <property type="match status" value="1"/>
</dbReference>
<dbReference type="SUPFAM" id="SSF50486">
    <property type="entry name" value="FMT C-terminal domain-like"/>
    <property type="match status" value="1"/>
</dbReference>
<dbReference type="SUPFAM" id="SSF53328">
    <property type="entry name" value="Formyltransferase"/>
    <property type="match status" value="1"/>
</dbReference>
<organism>
    <name type="scientific">Bos taurus</name>
    <name type="common">Bovine</name>
    <dbReference type="NCBI Taxonomy" id="9913"/>
    <lineage>
        <taxon>Eukaryota</taxon>
        <taxon>Metazoa</taxon>
        <taxon>Chordata</taxon>
        <taxon>Craniata</taxon>
        <taxon>Vertebrata</taxon>
        <taxon>Euteleostomi</taxon>
        <taxon>Mammalia</taxon>
        <taxon>Eutheria</taxon>
        <taxon>Laurasiatheria</taxon>
        <taxon>Artiodactyla</taxon>
        <taxon>Ruminantia</taxon>
        <taxon>Pecora</taxon>
        <taxon>Bovidae</taxon>
        <taxon>Bovinae</taxon>
        <taxon>Bos</taxon>
    </lineage>
</organism>
<keyword id="KW-0903">Direct protein sequencing</keyword>
<keyword id="KW-0496">Mitochondrion</keyword>
<keyword id="KW-0648">Protein biosynthesis</keyword>
<keyword id="KW-1185">Reference proteome</keyword>
<keyword id="KW-0808">Transferase</keyword>
<keyword id="KW-0809">Transit peptide</keyword>
<sequence>MRVLLRCCCGHLPVGGGAGRRSNPRWRALARLSASPGWEDGQGARVREKPPWRVLFFGNDQFARETLRALHAARENKEEELIEKLEVVTVPSPSPKGLPVKQYAVQSQLPVYEWPDVGSGEYDVGVVASFGRLLSEAFILKFPYGILNVHPSCLPRWRGPAPIIHTILHGDTIAGVTIMQIKPRRFDVGPILKQETVPVPPKSTSKELEAVLSRLGANMLISVLKNLPESLNNGRQQPAEGVTHAPKISAATSCIKWEEQTSEQIFRLYRAVGNIIPLQTLWMDNTIKLLDLVEVDNSILSDSKLTGQAVIPGSVIYHKQSQILLVCCKDDWIGVRSVMLKKTLTATDFYNGYLHPWYQKNSQAQPSQCRFQTLRLPPKKKQKKKIVAMQ</sequence>
<reference key="1">
    <citation type="journal article" date="2009" name="Science">
        <title>The genome sequence of taurine cattle: a window to ruminant biology and evolution.</title>
        <authorList>
            <consortium name="The bovine genome sequencing and analysis consortium"/>
        </authorList>
    </citation>
    <scope>NUCLEOTIDE SEQUENCE [LARGE SCALE GENOMIC DNA]</scope>
    <source>
        <strain>Hereford</strain>
    </source>
</reference>
<reference key="2">
    <citation type="journal article" date="1998" name="J. Biol. Chem.">
        <title>Mammalian mitochondrial methionyl-tRNA transformylase from bovine liver. Purification, characterization, and gene structure.</title>
        <authorList>
            <person name="Takeuchi N."/>
            <person name="Kawakami M."/>
            <person name="Omori A."/>
            <person name="Ueda T."/>
            <person name="Spremulli L.L."/>
            <person name="Watanabe K."/>
        </authorList>
    </citation>
    <scope>NUCLEOTIDE SEQUENCE [MRNA] OF 19-390</scope>
    <scope>PROTEIN SEQUENCE OF 34-40; 86-95 AND 195-204</scope>
    <scope>FUNCTION</scope>
    <scope>CATALYTIC ACTIVITY</scope>
    <scope>BIOPHYSICOCHEMICAL PROPERTIES</scope>
    <source>
        <tissue>Heart</tissue>
        <tissue>Liver</tissue>
    </source>
</reference>
<name>FMT_BOVIN</name>
<proteinExistence type="evidence at protein level"/>
<feature type="transit peptide" description="Mitochondrion" evidence="3">
    <location>
        <begin position="1"/>
        <end position="33"/>
    </location>
</feature>
<feature type="chain" id="PRO_0000010092" description="Methionyl-tRNA formyltransferase, mitochondrial">
    <location>
        <begin position="34"/>
        <end position="390"/>
    </location>
</feature>
<feature type="sequence conflict" description="In Ref. 2; BAA31237." evidence="2" ref="2">
    <original>RRS</original>
    <variation>TRP</variation>
    <location>
        <begin position="20"/>
        <end position="22"/>
    </location>
</feature>
<protein>
    <recommendedName>
        <fullName>Methionyl-tRNA formyltransferase, mitochondrial</fullName>
        <shortName>MtFMT</shortName>
        <ecNumber evidence="1">2.1.2.9</ecNumber>
    </recommendedName>
</protein>
<comment type="function">
    <text evidence="1">Methionyl-tRNA formyltransferase that formylates methionyl-tRNA in mitochondria and is crucial for translation initiation.</text>
</comment>
<comment type="catalytic activity">
    <reaction evidence="1">
        <text>L-methionyl-tRNA(fMet) + (6R)-10-formyltetrahydrofolate = N-formyl-L-methionyl-tRNA(fMet) + (6S)-5,6,7,8-tetrahydrofolate + H(+)</text>
        <dbReference type="Rhea" id="RHEA:24380"/>
        <dbReference type="Rhea" id="RHEA-COMP:9952"/>
        <dbReference type="Rhea" id="RHEA-COMP:9953"/>
        <dbReference type="ChEBI" id="CHEBI:15378"/>
        <dbReference type="ChEBI" id="CHEBI:57453"/>
        <dbReference type="ChEBI" id="CHEBI:78530"/>
        <dbReference type="ChEBI" id="CHEBI:78844"/>
        <dbReference type="ChEBI" id="CHEBI:195366"/>
        <dbReference type="EC" id="2.1.2.9"/>
    </reaction>
    <physiologicalReaction direction="left-to-right" evidence="3">
        <dbReference type="Rhea" id="RHEA:24381"/>
    </physiologicalReaction>
</comment>
<comment type="biophysicochemical properties">
    <kinetics>
        <KM evidence="1">0.025 uM for L-methionyl-tRNA(fMet)</KM>
    </kinetics>
</comment>
<comment type="subcellular location">
    <subcellularLocation>
        <location evidence="1">Mitochondrion</location>
    </subcellularLocation>
</comment>
<comment type="domain">
    <text>Composed of an N- and a C-terminal domain. The N-terminal domain carries the tetrahydrofolate (THF)-binding site and the C-terminal domain is presumably involved in positioning the Met-tRNA substrate for the formylation reaction.</text>
</comment>
<comment type="similarity">
    <text evidence="2">Belongs to the Fmt family.</text>
</comment>